<organism>
    <name type="scientific">Shewanella baltica (strain OS185)</name>
    <dbReference type="NCBI Taxonomy" id="402882"/>
    <lineage>
        <taxon>Bacteria</taxon>
        <taxon>Pseudomonadati</taxon>
        <taxon>Pseudomonadota</taxon>
        <taxon>Gammaproteobacteria</taxon>
        <taxon>Alteromonadales</taxon>
        <taxon>Shewanellaceae</taxon>
        <taxon>Shewanella</taxon>
    </lineage>
</organism>
<feature type="chain" id="PRO_1000010542" description="Acetylglutamate kinase">
    <location>
        <begin position="1"/>
        <end position="260"/>
    </location>
</feature>
<feature type="binding site" evidence="1">
    <location>
        <begin position="46"/>
        <end position="47"/>
    </location>
    <ligand>
        <name>substrate</name>
    </ligand>
</feature>
<feature type="binding site" evidence="1">
    <location>
        <position position="68"/>
    </location>
    <ligand>
        <name>substrate</name>
    </ligand>
</feature>
<feature type="binding site" evidence="1">
    <location>
        <position position="160"/>
    </location>
    <ligand>
        <name>substrate</name>
    </ligand>
</feature>
<feature type="site" description="Transition state stabilizer" evidence="1">
    <location>
        <position position="11"/>
    </location>
</feature>
<feature type="site" description="Transition state stabilizer" evidence="1">
    <location>
        <position position="219"/>
    </location>
</feature>
<comment type="function">
    <text evidence="1">Catalyzes the ATP-dependent phosphorylation of N-acetyl-L-glutamate.</text>
</comment>
<comment type="catalytic activity">
    <reaction evidence="1">
        <text>N-acetyl-L-glutamate + ATP = N-acetyl-L-glutamyl 5-phosphate + ADP</text>
        <dbReference type="Rhea" id="RHEA:14629"/>
        <dbReference type="ChEBI" id="CHEBI:30616"/>
        <dbReference type="ChEBI" id="CHEBI:44337"/>
        <dbReference type="ChEBI" id="CHEBI:57936"/>
        <dbReference type="ChEBI" id="CHEBI:456216"/>
        <dbReference type="EC" id="2.7.2.8"/>
    </reaction>
</comment>
<comment type="pathway">
    <text evidence="1">Amino-acid biosynthesis; L-arginine biosynthesis; N(2)-acetyl-L-ornithine from L-glutamate: step 2/4.</text>
</comment>
<comment type="subcellular location">
    <subcellularLocation>
        <location evidence="1">Cytoplasm</location>
    </subcellularLocation>
</comment>
<comment type="similarity">
    <text evidence="1">Belongs to the acetylglutamate kinase family. ArgB subfamily.</text>
</comment>
<accession>A6WTS2</accession>
<evidence type="ECO:0000255" key="1">
    <source>
        <dbReference type="HAMAP-Rule" id="MF_00082"/>
    </source>
</evidence>
<proteinExistence type="inferred from homology"/>
<name>ARGB_SHEB8</name>
<reference key="1">
    <citation type="submission" date="2007-07" db="EMBL/GenBank/DDBJ databases">
        <title>Complete sequence of chromosome of Shewanella baltica OS185.</title>
        <authorList>
            <consortium name="US DOE Joint Genome Institute"/>
            <person name="Copeland A."/>
            <person name="Lucas S."/>
            <person name="Lapidus A."/>
            <person name="Barry K."/>
            <person name="Glavina del Rio T."/>
            <person name="Dalin E."/>
            <person name="Tice H."/>
            <person name="Pitluck S."/>
            <person name="Sims D."/>
            <person name="Brettin T."/>
            <person name="Bruce D."/>
            <person name="Detter J.C."/>
            <person name="Han C."/>
            <person name="Schmutz J."/>
            <person name="Larimer F."/>
            <person name="Land M."/>
            <person name="Hauser L."/>
            <person name="Kyrpides N."/>
            <person name="Mikhailova N."/>
            <person name="Brettar I."/>
            <person name="Rodrigues J."/>
            <person name="Konstantinidis K."/>
            <person name="Tiedje J."/>
            <person name="Richardson P."/>
        </authorList>
    </citation>
    <scope>NUCLEOTIDE SEQUENCE [LARGE SCALE GENOMIC DNA]</scope>
    <source>
        <strain>OS185</strain>
    </source>
</reference>
<protein>
    <recommendedName>
        <fullName evidence="1">Acetylglutamate kinase</fullName>
        <ecNumber evidence="1">2.7.2.8</ecNumber>
    </recommendedName>
    <alternativeName>
        <fullName evidence="1">N-acetyl-L-glutamate 5-phosphotransferase</fullName>
    </alternativeName>
    <alternativeName>
        <fullName evidence="1">NAG kinase</fullName>
        <shortName evidence="1">NAGK</shortName>
    </alternativeName>
</protein>
<dbReference type="EC" id="2.7.2.8" evidence="1"/>
<dbReference type="EMBL" id="CP000753">
    <property type="protein sequence ID" value="ABS10211.1"/>
    <property type="molecule type" value="Genomic_DNA"/>
</dbReference>
<dbReference type="RefSeq" id="WP_011848138.1">
    <property type="nucleotide sequence ID" value="NC_009665.1"/>
</dbReference>
<dbReference type="SMR" id="A6WTS2"/>
<dbReference type="GeneID" id="11774198"/>
<dbReference type="KEGG" id="sbm:Shew185_4094"/>
<dbReference type="HOGENOM" id="CLU_053680_1_1_6"/>
<dbReference type="UniPathway" id="UPA00068">
    <property type="reaction ID" value="UER00107"/>
</dbReference>
<dbReference type="GO" id="GO:0005737">
    <property type="term" value="C:cytoplasm"/>
    <property type="evidence" value="ECO:0007669"/>
    <property type="project" value="UniProtKB-SubCell"/>
</dbReference>
<dbReference type="GO" id="GO:0003991">
    <property type="term" value="F:acetylglutamate kinase activity"/>
    <property type="evidence" value="ECO:0007669"/>
    <property type="project" value="UniProtKB-UniRule"/>
</dbReference>
<dbReference type="GO" id="GO:0005524">
    <property type="term" value="F:ATP binding"/>
    <property type="evidence" value="ECO:0007669"/>
    <property type="project" value="UniProtKB-UniRule"/>
</dbReference>
<dbReference type="GO" id="GO:0042450">
    <property type="term" value="P:arginine biosynthetic process via ornithine"/>
    <property type="evidence" value="ECO:0007669"/>
    <property type="project" value="UniProtKB-UniRule"/>
</dbReference>
<dbReference type="GO" id="GO:0006526">
    <property type="term" value="P:L-arginine biosynthetic process"/>
    <property type="evidence" value="ECO:0007669"/>
    <property type="project" value="UniProtKB-UniPathway"/>
</dbReference>
<dbReference type="FunFam" id="3.40.1160.10:FF:000008">
    <property type="entry name" value="Acetylglutamate kinase"/>
    <property type="match status" value="1"/>
</dbReference>
<dbReference type="Gene3D" id="3.40.1160.10">
    <property type="entry name" value="Acetylglutamate kinase-like"/>
    <property type="match status" value="1"/>
</dbReference>
<dbReference type="HAMAP" id="MF_00082">
    <property type="entry name" value="ArgB"/>
    <property type="match status" value="1"/>
</dbReference>
<dbReference type="InterPro" id="IPR036393">
    <property type="entry name" value="AceGlu_kinase-like_sf"/>
</dbReference>
<dbReference type="InterPro" id="IPR004662">
    <property type="entry name" value="AcgluKinase_fam"/>
</dbReference>
<dbReference type="InterPro" id="IPR037528">
    <property type="entry name" value="ArgB"/>
</dbReference>
<dbReference type="InterPro" id="IPR001048">
    <property type="entry name" value="Asp/Glu/Uridylate_kinase"/>
</dbReference>
<dbReference type="NCBIfam" id="TIGR00761">
    <property type="entry name" value="argB"/>
    <property type="match status" value="1"/>
</dbReference>
<dbReference type="PANTHER" id="PTHR23342">
    <property type="entry name" value="N-ACETYLGLUTAMATE SYNTHASE"/>
    <property type="match status" value="1"/>
</dbReference>
<dbReference type="PANTHER" id="PTHR23342:SF0">
    <property type="entry name" value="N-ACETYLGLUTAMATE SYNTHASE, MITOCHONDRIAL"/>
    <property type="match status" value="1"/>
</dbReference>
<dbReference type="Pfam" id="PF00696">
    <property type="entry name" value="AA_kinase"/>
    <property type="match status" value="1"/>
</dbReference>
<dbReference type="PIRSF" id="PIRSF000728">
    <property type="entry name" value="NAGK"/>
    <property type="match status" value="1"/>
</dbReference>
<dbReference type="SUPFAM" id="SSF53633">
    <property type="entry name" value="Carbamate kinase-like"/>
    <property type="match status" value="1"/>
</dbReference>
<gene>
    <name evidence="1" type="primary">argB</name>
    <name type="ordered locus">Shew185_4094</name>
</gene>
<sequence length="260" mass="26844">MSTNNSVLVLKVGGALLQCEMGMARLMDTAAAMLANGQQVLMVHGGGCLVDEQLAANGMETVKLEGLRVTPPEQMPIIAGALAGTSNKILQGAATKAGIVSVGMSLADGNTVSAKIKDERLGLVGEVTPKDGAYLKFILAQGWMPICSSIAMMDDGQMLNVNADQAATALAKLVGGKLVLLSDVSGVLDGKGQLIHSLNGKQIADLVKQGVIEKGMKVKVEAALEVAQWMGQAVQVASWRDASQLIALAKGEAVGTQIQP</sequence>
<keyword id="KW-0028">Amino-acid biosynthesis</keyword>
<keyword id="KW-0055">Arginine biosynthesis</keyword>
<keyword id="KW-0067">ATP-binding</keyword>
<keyword id="KW-0963">Cytoplasm</keyword>
<keyword id="KW-0418">Kinase</keyword>
<keyword id="KW-0547">Nucleotide-binding</keyword>
<keyword id="KW-0808">Transferase</keyword>